<dbReference type="EC" id="2.3.1.181" evidence="1"/>
<dbReference type="EMBL" id="CP001227">
    <property type="protein sequence ID" value="ACR47926.1"/>
    <property type="molecule type" value="Genomic_DNA"/>
</dbReference>
<dbReference type="RefSeq" id="WP_012737072.1">
    <property type="nucleotide sequence ID" value="NC_012730.1"/>
</dbReference>
<dbReference type="SMR" id="C4K2Y1"/>
<dbReference type="KEGG" id="rpk:RPR_07680"/>
<dbReference type="HOGENOM" id="CLU_035168_3_0_5"/>
<dbReference type="UniPathway" id="UPA00538">
    <property type="reaction ID" value="UER00592"/>
</dbReference>
<dbReference type="Proteomes" id="UP000005015">
    <property type="component" value="Chromosome"/>
</dbReference>
<dbReference type="GO" id="GO:0005737">
    <property type="term" value="C:cytoplasm"/>
    <property type="evidence" value="ECO:0007669"/>
    <property type="project" value="UniProtKB-SubCell"/>
</dbReference>
<dbReference type="GO" id="GO:0033819">
    <property type="term" value="F:lipoyl(octanoyl) transferase activity"/>
    <property type="evidence" value="ECO:0007669"/>
    <property type="project" value="UniProtKB-EC"/>
</dbReference>
<dbReference type="GO" id="GO:0036211">
    <property type="term" value="P:protein modification process"/>
    <property type="evidence" value="ECO:0007669"/>
    <property type="project" value="InterPro"/>
</dbReference>
<dbReference type="CDD" id="cd16444">
    <property type="entry name" value="LipB"/>
    <property type="match status" value="1"/>
</dbReference>
<dbReference type="Gene3D" id="3.30.930.10">
    <property type="entry name" value="Bira Bifunctional Protein, Domain 2"/>
    <property type="match status" value="1"/>
</dbReference>
<dbReference type="HAMAP" id="MF_00013">
    <property type="entry name" value="LipB"/>
    <property type="match status" value="1"/>
</dbReference>
<dbReference type="InterPro" id="IPR045864">
    <property type="entry name" value="aa-tRNA-synth_II/BPL/LPL"/>
</dbReference>
<dbReference type="InterPro" id="IPR004143">
    <property type="entry name" value="BPL_LPL_catalytic"/>
</dbReference>
<dbReference type="InterPro" id="IPR000544">
    <property type="entry name" value="Octanoyltransferase"/>
</dbReference>
<dbReference type="InterPro" id="IPR020605">
    <property type="entry name" value="Octanoyltransferase_CS"/>
</dbReference>
<dbReference type="NCBIfam" id="TIGR00214">
    <property type="entry name" value="lipB"/>
    <property type="match status" value="1"/>
</dbReference>
<dbReference type="NCBIfam" id="NF010921">
    <property type="entry name" value="PRK14341.1"/>
    <property type="match status" value="1"/>
</dbReference>
<dbReference type="NCBIfam" id="NF010925">
    <property type="entry name" value="PRK14345.1"/>
    <property type="match status" value="1"/>
</dbReference>
<dbReference type="PANTHER" id="PTHR10993:SF7">
    <property type="entry name" value="LIPOYLTRANSFERASE 2, MITOCHONDRIAL-RELATED"/>
    <property type="match status" value="1"/>
</dbReference>
<dbReference type="PANTHER" id="PTHR10993">
    <property type="entry name" value="OCTANOYLTRANSFERASE"/>
    <property type="match status" value="1"/>
</dbReference>
<dbReference type="Pfam" id="PF21948">
    <property type="entry name" value="LplA-B_cat"/>
    <property type="match status" value="1"/>
</dbReference>
<dbReference type="PIRSF" id="PIRSF016262">
    <property type="entry name" value="LPLase"/>
    <property type="match status" value="1"/>
</dbReference>
<dbReference type="SUPFAM" id="SSF55681">
    <property type="entry name" value="Class II aaRS and biotin synthetases"/>
    <property type="match status" value="1"/>
</dbReference>
<dbReference type="PROSITE" id="PS51733">
    <property type="entry name" value="BPL_LPL_CATALYTIC"/>
    <property type="match status" value="1"/>
</dbReference>
<dbReference type="PROSITE" id="PS01313">
    <property type="entry name" value="LIPB"/>
    <property type="match status" value="1"/>
</dbReference>
<sequence length="209" mass="24150">MIRFITIPDFADYQVILKLMEDYVNKVISDHEPEIIYLVEHSEVYTAGTNYKQEELLNYGDIPVIYTGRGGKFTFHGPGQRVIYPILNLDSPNRHKDLKLYIKMLEEWIINSLNYFGIKAYIIKDKVGIWVKVRKDEFAKIAAIGVRVRKWVTYHGVAINISTDLSKFSGIIPCGLEDSLVTSLNQLGIHVEMSEFDKIIQTEFNKIFK</sequence>
<organism>
    <name type="scientific">Rickettsia peacockii (strain Rustic)</name>
    <dbReference type="NCBI Taxonomy" id="562019"/>
    <lineage>
        <taxon>Bacteria</taxon>
        <taxon>Pseudomonadati</taxon>
        <taxon>Pseudomonadota</taxon>
        <taxon>Alphaproteobacteria</taxon>
        <taxon>Rickettsiales</taxon>
        <taxon>Rickettsiaceae</taxon>
        <taxon>Rickettsieae</taxon>
        <taxon>Rickettsia</taxon>
        <taxon>spotted fever group</taxon>
    </lineage>
</organism>
<gene>
    <name evidence="1" type="primary">lipB</name>
    <name type="ordered locus">RPR_07680</name>
</gene>
<accession>C4K2Y1</accession>
<comment type="function">
    <text evidence="1">Catalyzes the transfer of endogenously produced octanoic acid from octanoyl-acyl-carrier-protein onto the lipoyl domains of lipoate-dependent enzymes. Lipoyl-ACP can also act as a substrate although octanoyl-ACP is likely to be the physiological substrate.</text>
</comment>
<comment type="catalytic activity">
    <reaction evidence="1">
        <text>octanoyl-[ACP] + L-lysyl-[protein] = N(6)-octanoyl-L-lysyl-[protein] + holo-[ACP] + H(+)</text>
        <dbReference type="Rhea" id="RHEA:17665"/>
        <dbReference type="Rhea" id="RHEA-COMP:9636"/>
        <dbReference type="Rhea" id="RHEA-COMP:9685"/>
        <dbReference type="Rhea" id="RHEA-COMP:9752"/>
        <dbReference type="Rhea" id="RHEA-COMP:9928"/>
        <dbReference type="ChEBI" id="CHEBI:15378"/>
        <dbReference type="ChEBI" id="CHEBI:29969"/>
        <dbReference type="ChEBI" id="CHEBI:64479"/>
        <dbReference type="ChEBI" id="CHEBI:78463"/>
        <dbReference type="ChEBI" id="CHEBI:78809"/>
        <dbReference type="EC" id="2.3.1.181"/>
    </reaction>
</comment>
<comment type="pathway">
    <text evidence="1">Protein modification; protein lipoylation via endogenous pathway; protein N(6)-(lipoyl)lysine from octanoyl-[acyl-carrier-protein]: step 1/2.</text>
</comment>
<comment type="subcellular location">
    <subcellularLocation>
        <location evidence="1">Cytoplasm</location>
    </subcellularLocation>
</comment>
<comment type="miscellaneous">
    <text evidence="1">In the reaction, the free carboxyl group of octanoic acid is attached via an amide linkage to the epsilon-amino group of a specific lysine residue of lipoyl domains of lipoate-dependent enzymes.</text>
</comment>
<comment type="similarity">
    <text evidence="1">Belongs to the LipB family.</text>
</comment>
<reference key="1">
    <citation type="journal article" date="2009" name="PLoS ONE">
        <title>Genome sequence of the endosymbiont Rickettsia peacockii and comparison with virulent Rickettsia rickettsii: identification of virulence factors.</title>
        <authorList>
            <person name="Felsheim R.F."/>
            <person name="Kurtti T.J."/>
            <person name="Munderloh U.G."/>
        </authorList>
    </citation>
    <scope>NUCLEOTIDE SEQUENCE [LARGE SCALE GENOMIC DNA]</scope>
    <source>
        <strain>Rustic</strain>
    </source>
</reference>
<name>LIPB_RICPU</name>
<protein>
    <recommendedName>
        <fullName evidence="1">Octanoyltransferase</fullName>
        <ecNumber evidence="1">2.3.1.181</ecNumber>
    </recommendedName>
    <alternativeName>
        <fullName evidence="1">Lipoate-protein ligase B</fullName>
    </alternativeName>
    <alternativeName>
        <fullName evidence="1">Lipoyl/octanoyl transferase</fullName>
    </alternativeName>
    <alternativeName>
        <fullName evidence="1">Octanoyl-[acyl-carrier-protein]-protein N-octanoyltransferase</fullName>
    </alternativeName>
</protein>
<proteinExistence type="inferred from homology"/>
<keyword id="KW-0012">Acyltransferase</keyword>
<keyword id="KW-0963">Cytoplasm</keyword>
<keyword id="KW-0808">Transferase</keyword>
<feature type="chain" id="PRO_1000201802" description="Octanoyltransferase">
    <location>
        <begin position="1"/>
        <end position="209"/>
    </location>
</feature>
<feature type="domain" description="BPL/LPL catalytic" evidence="2">
    <location>
        <begin position="30"/>
        <end position="209"/>
    </location>
</feature>
<feature type="active site" description="Acyl-thioester intermediate" evidence="1">
    <location>
        <position position="174"/>
    </location>
</feature>
<feature type="binding site" evidence="1">
    <location>
        <begin position="69"/>
        <end position="76"/>
    </location>
    <ligand>
        <name>substrate</name>
    </ligand>
</feature>
<feature type="binding site" evidence="1">
    <location>
        <begin position="143"/>
        <end position="145"/>
    </location>
    <ligand>
        <name>substrate</name>
    </ligand>
</feature>
<feature type="binding site" evidence="1">
    <location>
        <begin position="156"/>
        <end position="158"/>
    </location>
    <ligand>
        <name>substrate</name>
    </ligand>
</feature>
<feature type="site" description="Lowers pKa of active site Cys" evidence="1">
    <location>
        <position position="140"/>
    </location>
</feature>
<evidence type="ECO:0000255" key="1">
    <source>
        <dbReference type="HAMAP-Rule" id="MF_00013"/>
    </source>
</evidence>
<evidence type="ECO:0000255" key="2">
    <source>
        <dbReference type="PROSITE-ProRule" id="PRU01067"/>
    </source>
</evidence>